<evidence type="ECO:0000255" key="1">
    <source>
        <dbReference type="HAMAP-Rule" id="MF_00815"/>
    </source>
</evidence>
<reference key="1">
    <citation type="submission" date="2008-10" db="EMBL/GenBank/DDBJ databases">
        <title>The complete genome sequence of Helicobacter pylori strain P12.</title>
        <authorList>
            <person name="Fischer W."/>
            <person name="Windhager L."/>
            <person name="Karnholz A."/>
            <person name="Zeiller M."/>
            <person name="Zimmer R."/>
            <person name="Haas R."/>
        </authorList>
    </citation>
    <scope>NUCLEOTIDE SEQUENCE [LARGE SCALE GENOMIC DNA]</scope>
    <source>
        <strain>P12</strain>
    </source>
</reference>
<proteinExistence type="inferred from homology"/>
<organism>
    <name type="scientific">Helicobacter pylori (strain P12)</name>
    <dbReference type="NCBI Taxonomy" id="570508"/>
    <lineage>
        <taxon>Bacteria</taxon>
        <taxon>Pseudomonadati</taxon>
        <taxon>Campylobacterota</taxon>
        <taxon>Epsilonproteobacteria</taxon>
        <taxon>Campylobacterales</taxon>
        <taxon>Helicobacteraceae</taxon>
        <taxon>Helicobacter</taxon>
    </lineage>
</organism>
<accession>B6JMX3</accession>
<keyword id="KW-0066">ATP synthesis</keyword>
<keyword id="KW-0997">Cell inner membrane</keyword>
<keyword id="KW-1003">Cell membrane</keyword>
<keyword id="KW-0139">CF(1)</keyword>
<keyword id="KW-0375">Hydrogen ion transport</keyword>
<keyword id="KW-0406">Ion transport</keyword>
<keyword id="KW-0472">Membrane</keyword>
<keyword id="KW-0813">Transport</keyword>
<comment type="function">
    <text evidence="1">Produces ATP from ADP in the presence of a proton gradient across the membrane. The gamma chain is believed to be important in regulating ATPase activity and the flow of protons through the CF(0) complex.</text>
</comment>
<comment type="subunit">
    <text evidence="1">F-type ATPases have 2 components, CF(1) - the catalytic core - and CF(0) - the membrane proton channel. CF(1) has five subunits: alpha(3), beta(3), gamma(1), delta(1), epsilon(1). CF(0) has three main subunits: a, b and c.</text>
</comment>
<comment type="subcellular location">
    <subcellularLocation>
        <location evidence="1">Cell inner membrane</location>
        <topology evidence="1">Peripheral membrane protein</topology>
    </subcellularLocation>
</comment>
<comment type="similarity">
    <text evidence="1">Belongs to the ATPase gamma chain family.</text>
</comment>
<feature type="chain" id="PRO_1000134159" description="ATP synthase gamma chain">
    <location>
        <begin position="1"/>
        <end position="301"/>
    </location>
</feature>
<protein>
    <recommendedName>
        <fullName evidence="1">ATP synthase gamma chain</fullName>
    </recommendedName>
    <alternativeName>
        <fullName evidence="1">ATP synthase F1 sector gamma subunit</fullName>
    </alternativeName>
    <alternativeName>
        <fullName evidence="1">F-ATPase gamma subunit</fullName>
    </alternativeName>
</protein>
<sequence length="301" mass="34095">MANLRDIRKKIGSVKNTQKITHAMKLVSTSKLRKAEEVARNSRAYALKLDAVFDDVLSKMKNQGIEDIQSKYFRELERLEIKKVDIIFITADKGLCGGFNTNTIKKVLACTNEYKEKDIKVRLRGIGKKGNEYFSFNGIEVLDKINNLSSTPNYERAQEFMKKVVEDYLSGKTDKVIIIHNGFKNMITQEIRVKTILPIGYKIIHQNPQPNEVQETITSEPSGSEDEILDSLAEKYVEYSLYYALIDSLAAEHSARMQAMDTATNNAKDLVKTLTISYNKARQEAITTELVEINAGVEALK</sequence>
<gene>
    <name evidence="1" type="primary">atpG</name>
    <name type="ordered locus">HPP12_1099</name>
</gene>
<name>ATPG_HELP2</name>
<dbReference type="EMBL" id="CP001217">
    <property type="protein sequence ID" value="ACJ08251.1"/>
    <property type="molecule type" value="Genomic_DNA"/>
</dbReference>
<dbReference type="SMR" id="B6JMX3"/>
<dbReference type="KEGG" id="hpp:HPP12_1099"/>
<dbReference type="HOGENOM" id="CLU_050669_0_1_7"/>
<dbReference type="Proteomes" id="UP000008198">
    <property type="component" value="Chromosome"/>
</dbReference>
<dbReference type="GO" id="GO:0005886">
    <property type="term" value="C:plasma membrane"/>
    <property type="evidence" value="ECO:0007669"/>
    <property type="project" value="UniProtKB-SubCell"/>
</dbReference>
<dbReference type="GO" id="GO:0045259">
    <property type="term" value="C:proton-transporting ATP synthase complex"/>
    <property type="evidence" value="ECO:0007669"/>
    <property type="project" value="UniProtKB-KW"/>
</dbReference>
<dbReference type="GO" id="GO:0005524">
    <property type="term" value="F:ATP binding"/>
    <property type="evidence" value="ECO:0007669"/>
    <property type="project" value="UniProtKB-UniRule"/>
</dbReference>
<dbReference type="GO" id="GO:0046933">
    <property type="term" value="F:proton-transporting ATP synthase activity, rotational mechanism"/>
    <property type="evidence" value="ECO:0007669"/>
    <property type="project" value="UniProtKB-UniRule"/>
</dbReference>
<dbReference type="GO" id="GO:0042777">
    <property type="term" value="P:proton motive force-driven plasma membrane ATP synthesis"/>
    <property type="evidence" value="ECO:0007669"/>
    <property type="project" value="UniProtKB-UniRule"/>
</dbReference>
<dbReference type="CDD" id="cd12151">
    <property type="entry name" value="F1-ATPase_gamma"/>
    <property type="match status" value="1"/>
</dbReference>
<dbReference type="FunFam" id="1.10.287.80:FF:000007">
    <property type="entry name" value="ATP synthase gamma chain"/>
    <property type="match status" value="1"/>
</dbReference>
<dbReference type="FunFam" id="3.40.1380.10:FF:000006">
    <property type="entry name" value="ATP synthase gamma chain"/>
    <property type="match status" value="1"/>
</dbReference>
<dbReference type="Gene3D" id="3.40.1380.10">
    <property type="match status" value="1"/>
</dbReference>
<dbReference type="Gene3D" id="1.10.287.80">
    <property type="entry name" value="ATP synthase, gamma subunit, helix hairpin domain"/>
    <property type="match status" value="2"/>
</dbReference>
<dbReference type="HAMAP" id="MF_00815">
    <property type="entry name" value="ATP_synth_gamma_bact"/>
    <property type="match status" value="1"/>
</dbReference>
<dbReference type="InterPro" id="IPR035968">
    <property type="entry name" value="ATP_synth_F1_ATPase_gsu"/>
</dbReference>
<dbReference type="InterPro" id="IPR000131">
    <property type="entry name" value="ATP_synth_F1_gsu"/>
</dbReference>
<dbReference type="NCBIfam" id="TIGR01146">
    <property type="entry name" value="ATPsyn_F1gamma"/>
    <property type="match status" value="1"/>
</dbReference>
<dbReference type="PANTHER" id="PTHR11693">
    <property type="entry name" value="ATP SYNTHASE GAMMA CHAIN"/>
    <property type="match status" value="1"/>
</dbReference>
<dbReference type="PANTHER" id="PTHR11693:SF22">
    <property type="entry name" value="ATP SYNTHASE SUBUNIT GAMMA, MITOCHONDRIAL"/>
    <property type="match status" value="1"/>
</dbReference>
<dbReference type="Pfam" id="PF00231">
    <property type="entry name" value="ATP-synt"/>
    <property type="match status" value="1"/>
</dbReference>
<dbReference type="PRINTS" id="PR00126">
    <property type="entry name" value="ATPASEGAMMA"/>
</dbReference>
<dbReference type="SUPFAM" id="SSF52943">
    <property type="entry name" value="ATP synthase (F1-ATPase), gamma subunit"/>
    <property type="match status" value="1"/>
</dbReference>